<comment type="function">
    <text evidence="4">Cytotoxicity-activating receptor that may contribute to the increased efficiency of activated natural killer (NK) cells to mediate tumor cell lysis.</text>
</comment>
<comment type="subunit">
    <text evidence="4 5">Interacts with TYROBP/DAP12. Interacts with KMT2E isoform NKp44L.</text>
</comment>
<comment type="interaction">
    <interactant intactId="EBI-14058375">
        <id>O95944</id>
    </interactant>
    <interactant intactId="EBI-15014150">
        <id>Q8IZD2-8</id>
        <label>KMT2E</label>
    </interactant>
    <organismsDiffer>false</organismsDiffer>
    <experiments>4</experiments>
</comment>
<comment type="interaction">
    <interactant intactId="EBI-14058375">
        <id>O95944</id>
    </interactant>
    <interactant intactId="EBI-358311">
        <id>P12004</id>
        <label>PCNA</label>
    </interactant>
    <organismsDiffer>false</organismsDiffer>
    <experiments>7</experiments>
</comment>
<comment type="interaction">
    <interactant intactId="EBI-14058375">
        <id>O95944</id>
    </interactant>
    <interactant intactId="EBI-2214794">
        <id>O43914</id>
        <label>TYROBP</label>
    </interactant>
    <organismsDiffer>false</organismsDiffer>
    <experiments>2</experiments>
</comment>
<comment type="subcellular location">
    <subcellularLocation>
        <location evidence="8">Cell membrane</location>
        <topology evidence="8">Single-pass type I membrane protein</topology>
    </subcellularLocation>
</comment>
<comment type="alternative products">
    <event type="alternative splicing"/>
    <isoform>
        <id>O95944-1</id>
        <name>1</name>
        <sequence type="displayed"/>
    </isoform>
    <isoform>
        <id>O95944-2</id>
        <name>2</name>
        <name>NKp44RG2</name>
        <sequence type="described" ref="VSP_010409 VSP_010410"/>
    </isoform>
    <isoform>
        <id>O95944-3</id>
        <name>3</name>
        <name>NKp44RG1</name>
        <sequence type="described" ref="VSP_010410"/>
    </isoform>
</comment>
<comment type="tissue specificity">
    <text evidence="4">Selectively expressed by activated NK cells and by in vitro cultured (i.e. activated) TCRg/d lymphoid cells.</text>
</comment>
<comment type="similarity">
    <text evidence="8">Belongs to the natural cytotoxicity receptor (NCR) family.</text>
</comment>
<sequence>MAWRALHPLLLLLLLFPGSQAQSKAQVLQSVAGQTLTVRCQYPPTGSLYEKKGWCKEASALVCIRLVTSSKPRTMAWTSRFTIWDDPDAGFFTVTMTDLREEDSGHYWCRIYRPSDNSVSKSVRFYLVVSPASASTQTSWTPRDLVSSQTQTQSCVPPTAGARQAPESPSTIPVPSQPQNSTLRPGPAAPIALVPVFCGLLVAKSLVLSALLVWWGDIWWKTMMELRSLDTQKATCHLQQVTDLPWTSVSSPVEREILYHTVARTKISDDDDEHTL</sequence>
<protein>
    <recommendedName>
        <fullName>Natural cytotoxicity triggering receptor 2</fullName>
    </recommendedName>
    <alternativeName>
        <fullName>Lymphocyte antigen 95 homolog</fullName>
    </alternativeName>
    <alternativeName>
        <fullName>NK cell-activating receptor</fullName>
    </alternativeName>
    <alternativeName>
        <fullName>Natural killer cell p44-related protein</fullName>
        <shortName>NK-p44</shortName>
        <shortName>NKp44</shortName>
    </alternativeName>
    <cdAntigenName>CD336</cdAntigenName>
</protein>
<reference key="1">
    <citation type="journal article" date="1999" name="J. Exp. Med.">
        <title>NKp44, a triggering receptor involved in tumor cell lysis by activated human natural killer cells, is a novel member of the immunoglobulin superfamily.</title>
        <authorList>
            <person name="Cantoni C."/>
            <person name="Bottino C."/>
            <person name="Vitale M."/>
            <person name="Pessino A."/>
            <person name="Augugliaro R."/>
            <person name="Malaspina A."/>
            <person name="Parolini S."/>
            <person name="Moretta L."/>
            <person name="Moretta A."/>
            <person name="Biassoni R."/>
        </authorList>
    </citation>
    <scope>NUCLEOTIDE SEQUENCE [MRNA] (ISOFORM 1)</scope>
    <scope>TISSUE SPECIFICITY</scope>
    <scope>DISULFIDE BONDS</scope>
    <scope>FUNCTION</scope>
    <scope>INTERACTION WITH TYROBP</scope>
    <scope>VARIANTS PRO-139 AND VAL-223</scope>
    <source>
        <tissue>Lymphoid tissue</tissue>
    </source>
</reference>
<reference key="2">
    <citation type="submission" date="1998-08" db="EMBL/GenBank/DDBJ databases">
        <title>NKp44 related genes.</title>
        <authorList>
            <person name="Cantoni C."/>
            <person name="Biassoni R."/>
        </authorList>
    </citation>
    <scope>NUCLEOTIDE SEQUENCE [MRNA] (ISOFORMS 2 AND 3)</scope>
    <scope>VARIANT PRO-139</scope>
    <source>
        <tissue>Natural killer cell</tissue>
    </source>
</reference>
<reference key="3">
    <citation type="journal article" date="2003" name="Nature">
        <title>The DNA sequence and analysis of human chromosome 6.</title>
        <authorList>
            <person name="Mungall A.J."/>
            <person name="Palmer S.A."/>
            <person name="Sims S.K."/>
            <person name="Edwards C.A."/>
            <person name="Ashurst J.L."/>
            <person name="Wilming L."/>
            <person name="Jones M.C."/>
            <person name="Horton R."/>
            <person name="Hunt S.E."/>
            <person name="Scott C.E."/>
            <person name="Gilbert J.G.R."/>
            <person name="Clamp M.E."/>
            <person name="Bethel G."/>
            <person name="Milne S."/>
            <person name="Ainscough R."/>
            <person name="Almeida J.P."/>
            <person name="Ambrose K.D."/>
            <person name="Andrews T.D."/>
            <person name="Ashwell R.I.S."/>
            <person name="Babbage A.K."/>
            <person name="Bagguley C.L."/>
            <person name="Bailey J."/>
            <person name="Banerjee R."/>
            <person name="Barker D.J."/>
            <person name="Barlow K.F."/>
            <person name="Bates K."/>
            <person name="Beare D.M."/>
            <person name="Beasley H."/>
            <person name="Beasley O."/>
            <person name="Bird C.P."/>
            <person name="Blakey S.E."/>
            <person name="Bray-Allen S."/>
            <person name="Brook J."/>
            <person name="Brown A.J."/>
            <person name="Brown J.Y."/>
            <person name="Burford D.C."/>
            <person name="Burrill W."/>
            <person name="Burton J."/>
            <person name="Carder C."/>
            <person name="Carter N.P."/>
            <person name="Chapman J.C."/>
            <person name="Clark S.Y."/>
            <person name="Clark G."/>
            <person name="Clee C.M."/>
            <person name="Clegg S."/>
            <person name="Cobley V."/>
            <person name="Collier R.E."/>
            <person name="Collins J.E."/>
            <person name="Colman L.K."/>
            <person name="Corby N.R."/>
            <person name="Coville G.J."/>
            <person name="Culley K.M."/>
            <person name="Dhami P."/>
            <person name="Davies J."/>
            <person name="Dunn M."/>
            <person name="Earthrowl M.E."/>
            <person name="Ellington A.E."/>
            <person name="Evans K.A."/>
            <person name="Faulkner L."/>
            <person name="Francis M.D."/>
            <person name="Frankish A."/>
            <person name="Frankland J."/>
            <person name="French L."/>
            <person name="Garner P."/>
            <person name="Garnett J."/>
            <person name="Ghori M.J."/>
            <person name="Gilby L.M."/>
            <person name="Gillson C.J."/>
            <person name="Glithero R.J."/>
            <person name="Grafham D.V."/>
            <person name="Grant M."/>
            <person name="Gribble S."/>
            <person name="Griffiths C."/>
            <person name="Griffiths M.N.D."/>
            <person name="Hall R."/>
            <person name="Halls K.S."/>
            <person name="Hammond S."/>
            <person name="Harley J.L."/>
            <person name="Hart E.A."/>
            <person name="Heath P.D."/>
            <person name="Heathcott R."/>
            <person name="Holmes S.J."/>
            <person name="Howden P.J."/>
            <person name="Howe K.L."/>
            <person name="Howell G.R."/>
            <person name="Huckle E."/>
            <person name="Humphray S.J."/>
            <person name="Humphries M.D."/>
            <person name="Hunt A.R."/>
            <person name="Johnson C.M."/>
            <person name="Joy A.A."/>
            <person name="Kay M."/>
            <person name="Keenan S.J."/>
            <person name="Kimberley A.M."/>
            <person name="King A."/>
            <person name="Laird G.K."/>
            <person name="Langford C."/>
            <person name="Lawlor S."/>
            <person name="Leongamornlert D.A."/>
            <person name="Leversha M."/>
            <person name="Lloyd C.R."/>
            <person name="Lloyd D.M."/>
            <person name="Loveland J.E."/>
            <person name="Lovell J."/>
            <person name="Martin S."/>
            <person name="Mashreghi-Mohammadi M."/>
            <person name="Maslen G.L."/>
            <person name="Matthews L."/>
            <person name="McCann O.T."/>
            <person name="McLaren S.J."/>
            <person name="McLay K."/>
            <person name="McMurray A."/>
            <person name="Moore M.J.F."/>
            <person name="Mullikin J.C."/>
            <person name="Niblett D."/>
            <person name="Nickerson T."/>
            <person name="Novik K.L."/>
            <person name="Oliver K."/>
            <person name="Overton-Larty E.K."/>
            <person name="Parker A."/>
            <person name="Patel R."/>
            <person name="Pearce A.V."/>
            <person name="Peck A.I."/>
            <person name="Phillimore B.J.C.T."/>
            <person name="Phillips S."/>
            <person name="Plumb R.W."/>
            <person name="Porter K.M."/>
            <person name="Ramsey Y."/>
            <person name="Ranby S.A."/>
            <person name="Rice C.M."/>
            <person name="Ross M.T."/>
            <person name="Searle S.M."/>
            <person name="Sehra H.K."/>
            <person name="Sheridan E."/>
            <person name="Skuce C.D."/>
            <person name="Smith S."/>
            <person name="Smith M."/>
            <person name="Spraggon L."/>
            <person name="Squares S.L."/>
            <person name="Steward C.A."/>
            <person name="Sycamore N."/>
            <person name="Tamlyn-Hall G."/>
            <person name="Tester J."/>
            <person name="Theaker A.J."/>
            <person name="Thomas D.W."/>
            <person name="Thorpe A."/>
            <person name="Tracey A."/>
            <person name="Tromans A."/>
            <person name="Tubby B."/>
            <person name="Wall M."/>
            <person name="Wallis J.M."/>
            <person name="West A.P."/>
            <person name="White S.S."/>
            <person name="Whitehead S.L."/>
            <person name="Whittaker H."/>
            <person name="Wild A."/>
            <person name="Willey D.J."/>
            <person name="Wilmer T.E."/>
            <person name="Wood J.M."/>
            <person name="Wray P.W."/>
            <person name="Wyatt J.C."/>
            <person name="Young L."/>
            <person name="Younger R.M."/>
            <person name="Bentley D.R."/>
            <person name="Coulson A."/>
            <person name="Durbin R.M."/>
            <person name="Hubbard T."/>
            <person name="Sulston J.E."/>
            <person name="Dunham I."/>
            <person name="Rogers J."/>
            <person name="Beck S."/>
        </authorList>
    </citation>
    <scope>NUCLEOTIDE SEQUENCE [LARGE SCALE GENOMIC DNA]</scope>
</reference>
<reference key="4">
    <citation type="journal article" date="2013" name="Blood">
        <title>Identification of a cellular ligand for the natural cytotoxicity receptor NKp44.</title>
        <authorList>
            <person name="Baychelier F."/>
            <person name="Sennepin A."/>
            <person name="Ermonval M."/>
            <person name="Dorgham K."/>
            <person name="Debre P."/>
            <person name="Vieillard V."/>
        </authorList>
    </citation>
    <scope>INTERACTION WITH KMT2E</scope>
    <scope>SUBUNIT</scope>
</reference>
<reference key="5">
    <citation type="journal article" date="2003" name="Structure">
        <title>The three-dimensional structure of the human NK cell receptor NKp44, a triggering partner in natural cytotoxicity.</title>
        <authorList>
            <person name="Cantoni C."/>
            <person name="Ponassi M."/>
            <person name="Biassoni R."/>
            <person name="Conte R."/>
            <person name="Spallarossa A."/>
            <person name="Moretta A."/>
            <person name="Moretta L."/>
            <person name="Bolognesi M."/>
            <person name="Bordo D."/>
        </authorList>
    </citation>
    <scope>X-RAY CRYSTALLOGRAPHY (2.2 ANGSTROMS) OF 29-130</scope>
</reference>
<accession>O95944</accession>
<accession>Q9H562</accession>
<accession>Q9H563</accession>
<accession>Q9H564</accession>
<accession>Q9UMT1</accession>
<accession>Q9UMT2</accession>
<dbReference type="EMBL" id="AJ225109">
    <property type="protein sequence ID" value="CAB39168.1"/>
    <property type="molecule type" value="mRNA"/>
</dbReference>
<dbReference type="EMBL" id="AJ010099">
    <property type="protein sequence ID" value="CAB52289.1"/>
    <property type="molecule type" value="mRNA"/>
</dbReference>
<dbReference type="EMBL" id="AJ010100">
    <property type="protein sequence ID" value="CAB52290.1"/>
    <property type="molecule type" value="mRNA"/>
</dbReference>
<dbReference type="EMBL" id="AL136967">
    <property type="status" value="NOT_ANNOTATED_CDS"/>
    <property type="molecule type" value="Genomic_DNA"/>
</dbReference>
<dbReference type="CCDS" id="CCDS4855.1">
    <molecule id="O95944-1"/>
</dbReference>
<dbReference type="CCDS" id="CCDS56428.1">
    <molecule id="O95944-2"/>
</dbReference>
<dbReference type="CCDS" id="CCDS56429.1">
    <molecule id="O95944-3"/>
</dbReference>
<dbReference type="RefSeq" id="NP_001186438.1">
    <molecule id="O95944-2"/>
    <property type="nucleotide sequence ID" value="NM_001199509.2"/>
</dbReference>
<dbReference type="RefSeq" id="NP_001186439.1">
    <molecule id="O95944-3"/>
    <property type="nucleotide sequence ID" value="NM_001199510.2"/>
</dbReference>
<dbReference type="RefSeq" id="NP_004819.2">
    <molecule id="O95944-1"/>
    <property type="nucleotide sequence ID" value="NM_004828.4"/>
</dbReference>
<dbReference type="PDB" id="1HKF">
    <property type="method" value="X-ray"/>
    <property type="resolution" value="2.20 A"/>
    <property type="chains" value="A=19-130"/>
</dbReference>
<dbReference type="PDBsum" id="1HKF"/>
<dbReference type="SMR" id="O95944"/>
<dbReference type="BioGRID" id="114827">
    <property type="interactions" value="3"/>
</dbReference>
<dbReference type="FunCoup" id="O95944">
    <property type="interactions" value="466"/>
</dbReference>
<dbReference type="IntAct" id="O95944">
    <property type="interactions" value="4"/>
</dbReference>
<dbReference type="STRING" id="9606.ENSP00000362181"/>
<dbReference type="GlyCosmos" id="O95944">
    <property type="glycosylation" value="1 site, No reported glycans"/>
</dbReference>
<dbReference type="GlyGen" id="O95944">
    <property type="glycosylation" value="2 sites"/>
</dbReference>
<dbReference type="iPTMnet" id="O95944"/>
<dbReference type="PhosphoSitePlus" id="O95944"/>
<dbReference type="BioMuta" id="NCR2"/>
<dbReference type="PaxDb" id="9606-ENSP00000362181"/>
<dbReference type="PeptideAtlas" id="O95944"/>
<dbReference type="Antibodypedia" id="30041">
    <property type="antibodies" value="379 antibodies from 30 providers"/>
</dbReference>
<dbReference type="DNASU" id="9436"/>
<dbReference type="Ensembl" id="ENST00000373083.8">
    <molecule id="O95944-3"/>
    <property type="protein sequence ID" value="ENSP00000362175.4"/>
    <property type="gene ID" value="ENSG00000096264.14"/>
</dbReference>
<dbReference type="Ensembl" id="ENST00000373086.3">
    <molecule id="O95944-2"/>
    <property type="protein sequence ID" value="ENSP00000362178.3"/>
    <property type="gene ID" value="ENSG00000096264.14"/>
</dbReference>
<dbReference type="Ensembl" id="ENST00000373089.10">
    <molecule id="O95944-1"/>
    <property type="protein sequence ID" value="ENSP00000362181.5"/>
    <property type="gene ID" value="ENSG00000096264.14"/>
</dbReference>
<dbReference type="GeneID" id="9436"/>
<dbReference type="KEGG" id="hsa:9436"/>
<dbReference type="MANE-Select" id="ENST00000373089.10">
    <property type="protein sequence ID" value="ENSP00000362181.5"/>
    <property type="RefSeq nucleotide sequence ID" value="NM_004828.4"/>
    <property type="RefSeq protein sequence ID" value="NP_004819.2"/>
</dbReference>
<dbReference type="UCSC" id="uc003oqh.3">
    <molecule id="O95944-1"/>
    <property type="organism name" value="human"/>
</dbReference>
<dbReference type="AGR" id="HGNC:6732"/>
<dbReference type="CTD" id="9436"/>
<dbReference type="DisGeNET" id="9436"/>
<dbReference type="GeneCards" id="NCR2"/>
<dbReference type="HGNC" id="HGNC:6732">
    <property type="gene designation" value="NCR2"/>
</dbReference>
<dbReference type="HPA" id="ENSG00000096264">
    <property type="expression patterns" value="Not detected"/>
</dbReference>
<dbReference type="MIM" id="604531">
    <property type="type" value="gene"/>
</dbReference>
<dbReference type="neXtProt" id="NX_O95944"/>
<dbReference type="OpenTargets" id="ENSG00000096264"/>
<dbReference type="PharmGKB" id="PA30496"/>
<dbReference type="VEuPathDB" id="HostDB:ENSG00000096264"/>
<dbReference type="eggNOG" id="ENOG502TG0M">
    <property type="taxonomic scope" value="Eukaryota"/>
</dbReference>
<dbReference type="GeneTree" id="ENSGT00940000153835"/>
<dbReference type="HOGENOM" id="CLU_051023_2_0_1"/>
<dbReference type="InParanoid" id="O95944"/>
<dbReference type="OMA" id="IWDNPST"/>
<dbReference type="OrthoDB" id="9805957at2759"/>
<dbReference type="PAN-GO" id="O95944">
    <property type="GO annotations" value="2 GO annotations based on evolutionary models"/>
</dbReference>
<dbReference type="PhylomeDB" id="O95944"/>
<dbReference type="TreeFam" id="TF334441"/>
<dbReference type="PathwayCommons" id="O95944"/>
<dbReference type="Reactome" id="R-HSA-198933">
    <property type="pathway name" value="Immunoregulatory interactions between a Lymphoid and a non-Lymphoid cell"/>
</dbReference>
<dbReference type="Reactome" id="R-HSA-2172127">
    <property type="pathway name" value="DAP12 interactions"/>
</dbReference>
<dbReference type="SignaLink" id="O95944"/>
<dbReference type="SIGNOR" id="O95944"/>
<dbReference type="BioGRID-ORCS" id="9436">
    <property type="hits" value="12 hits in 1138 CRISPR screens"/>
</dbReference>
<dbReference type="EvolutionaryTrace" id="O95944"/>
<dbReference type="GeneWiki" id="NCR2"/>
<dbReference type="GenomeRNAi" id="9436"/>
<dbReference type="Pharos" id="O95944">
    <property type="development level" value="Tbio"/>
</dbReference>
<dbReference type="PRO" id="PR:O95944"/>
<dbReference type="Proteomes" id="UP000005640">
    <property type="component" value="Chromosome 6"/>
</dbReference>
<dbReference type="RNAct" id="O95944">
    <property type="molecule type" value="protein"/>
</dbReference>
<dbReference type="Bgee" id="ENSG00000096264">
    <property type="expression patterns" value="Expressed in male germ line stem cell (sensu Vertebrata) in testis and 29 other cell types or tissues"/>
</dbReference>
<dbReference type="GO" id="GO:0009986">
    <property type="term" value="C:cell surface"/>
    <property type="evidence" value="ECO:0000318"/>
    <property type="project" value="GO_Central"/>
</dbReference>
<dbReference type="GO" id="GO:0005886">
    <property type="term" value="C:plasma membrane"/>
    <property type="evidence" value="ECO:0000304"/>
    <property type="project" value="Reactome"/>
</dbReference>
<dbReference type="GO" id="GO:0038023">
    <property type="term" value="F:signaling receptor activity"/>
    <property type="evidence" value="ECO:0000318"/>
    <property type="project" value="GO_Central"/>
</dbReference>
<dbReference type="GO" id="GO:0004888">
    <property type="term" value="F:transmembrane signaling receptor activity"/>
    <property type="evidence" value="ECO:0000304"/>
    <property type="project" value="ProtInc"/>
</dbReference>
<dbReference type="GO" id="GO:0006968">
    <property type="term" value="P:cellular defense response"/>
    <property type="evidence" value="ECO:0000304"/>
    <property type="project" value="ProtInc"/>
</dbReference>
<dbReference type="GO" id="GO:0007165">
    <property type="term" value="P:signal transduction"/>
    <property type="evidence" value="ECO:0000304"/>
    <property type="project" value="ProtInc"/>
</dbReference>
<dbReference type="CDD" id="cd05716">
    <property type="entry name" value="IgV_pIgR_like"/>
    <property type="match status" value="1"/>
</dbReference>
<dbReference type="FunFam" id="2.60.40.10:FF:000370">
    <property type="entry name" value="CMRF35-like molecule 1"/>
    <property type="match status" value="1"/>
</dbReference>
<dbReference type="Gene3D" id="2.60.40.10">
    <property type="entry name" value="Immunoglobulins"/>
    <property type="match status" value="1"/>
</dbReference>
<dbReference type="InterPro" id="IPR007110">
    <property type="entry name" value="Ig-like_dom"/>
</dbReference>
<dbReference type="InterPro" id="IPR036179">
    <property type="entry name" value="Ig-like_dom_sf"/>
</dbReference>
<dbReference type="InterPro" id="IPR013783">
    <property type="entry name" value="Ig-like_fold"/>
</dbReference>
<dbReference type="InterPro" id="IPR003599">
    <property type="entry name" value="Ig_sub"/>
</dbReference>
<dbReference type="InterPro" id="IPR013106">
    <property type="entry name" value="Ig_V-set"/>
</dbReference>
<dbReference type="InterPro" id="IPR052314">
    <property type="entry name" value="Immune_rcpt_domain"/>
</dbReference>
<dbReference type="PANTHER" id="PTHR16423:SF7">
    <property type="entry name" value="NATURAL CYTOTOXICITY TRIGGERING RECEPTOR 2"/>
    <property type="match status" value="1"/>
</dbReference>
<dbReference type="PANTHER" id="PTHR16423">
    <property type="entry name" value="TREM-LIKE TRANSCRIPT PROTEIN"/>
    <property type="match status" value="1"/>
</dbReference>
<dbReference type="Pfam" id="PF07686">
    <property type="entry name" value="V-set"/>
    <property type="match status" value="1"/>
</dbReference>
<dbReference type="SMART" id="SM00409">
    <property type="entry name" value="IG"/>
    <property type="match status" value="1"/>
</dbReference>
<dbReference type="SUPFAM" id="SSF48726">
    <property type="entry name" value="Immunoglobulin"/>
    <property type="match status" value="1"/>
</dbReference>
<dbReference type="PROSITE" id="PS50835">
    <property type="entry name" value="IG_LIKE"/>
    <property type="match status" value="1"/>
</dbReference>
<organism>
    <name type="scientific">Homo sapiens</name>
    <name type="common">Human</name>
    <dbReference type="NCBI Taxonomy" id="9606"/>
    <lineage>
        <taxon>Eukaryota</taxon>
        <taxon>Metazoa</taxon>
        <taxon>Chordata</taxon>
        <taxon>Craniata</taxon>
        <taxon>Vertebrata</taxon>
        <taxon>Euteleostomi</taxon>
        <taxon>Mammalia</taxon>
        <taxon>Eutheria</taxon>
        <taxon>Euarchontoglires</taxon>
        <taxon>Primates</taxon>
        <taxon>Haplorrhini</taxon>
        <taxon>Catarrhini</taxon>
        <taxon>Hominidae</taxon>
        <taxon>Homo</taxon>
    </lineage>
</organism>
<evidence type="ECO:0000255" key="1"/>
<evidence type="ECO:0000255" key="2">
    <source>
        <dbReference type="PROSITE-ProRule" id="PRU00114"/>
    </source>
</evidence>
<evidence type="ECO:0000256" key="3">
    <source>
        <dbReference type="SAM" id="MobiDB-lite"/>
    </source>
</evidence>
<evidence type="ECO:0000269" key="4">
    <source>
    </source>
</evidence>
<evidence type="ECO:0000269" key="5">
    <source>
    </source>
</evidence>
<evidence type="ECO:0000269" key="6">
    <source ref="2"/>
</evidence>
<evidence type="ECO:0000303" key="7">
    <source ref="2"/>
</evidence>
<evidence type="ECO:0000305" key="8"/>
<evidence type="ECO:0007829" key="9">
    <source>
        <dbReference type="PDB" id="1HKF"/>
    </source>
</evidence>
<name>NCTR2_HUMAN</name>
<feature type="signal peptide" evidence="1">
    <location>
        <begin position="1"/>
        <end position="21"/>
    </location>
</feature>
<feature type="chain" id="PRO_0000015031" description="Natural cytotoxicity triggering receptor 2">
    <location>
        <begin position="22"/>
        <end position="276"/>
    </location>
</feature>
<feature type="topological domain" description="Extracellular" evidence="1">
    <location>
        <begin position="22"/>
        <end position="192"/>
    </location>
</feature>
<feature type="transmembrane region" description="Helical" evidence="1">
    <location>
        <begin position="193"/>
        <end position="213"/>
    </location>
</feature>
<feature type="topological domain" description="Cytoplasmic" evidence="1">
    <location>
        <begin position="214"/>
        <end position="276"/>
    </location>
</feature>
<feature type="domain" description="Ig-like">
    <location>
        <begin position="22"/>
        <end position="120"/>
    </location>
</feature>
<feature type="region of interest" description="Disordered" evidence="3">
    <location>
        <begin position="138"/>
        <end position="184"/>
    </location>
</feature>
<feature type="compositionally biased region" description="Polar residues" evidence="3">
    <location>
        <begin position="138"/>
        <end position="156"/>
    </location>
</feature>
<feature type="compositionally biased region" description="Polar residues" evidence="3">
    <location>
        <begin position="167"/>
        <end position="183"/>
    </location>
</feature>
<feature type="glycosylation site" description="N-linked (GlcNAc...) asparagine" evidence="1">
    <location>
        <position position="180"/>
    </location>
</feature>
<feature type="disulfide bond" evidence="2">
    <location>
        <begin position="40"/>
        <end position="109"/>
    </location>
</feature>
<feature type="disulfide bond" evidence="2">
    <location>
        <begin position="55"/>
        <end position="63"/>
    </location>
</feature>
<feature type="splice variant" id="VSP_010409" description="In isoform 2." evidence="7">
    <original>Q</original>
    <variation>HPSSPLPVPLPSR</variation>
    <location>
        <position position="177"/>
    </location>
</feature>
<feature type="splice variant" id="VSP_010410" description="In isoform 2 and isoform 3." evidence="7">
    <original>GDIWWKTMMELRSLDTQKATCHLQQVTDLPWTSVSSPVEREILYHTVARTKISDDDDEHTL</original>
    <variation>VLRNRHMQHQGRSLLHPAQPRPQAHRHFPLSHRAPGGTYGGKP</variation>
    <location>
        <begin position="216"/>
        <end position="276"/>
    </location>
</feature>
<feature type="sequence variant" id="VAR_018634" description="In dbSNP:rs9471577.">
    <original>M</original>
    <variation>V</variation>
    <location>
        <position position="75"/>
    </location>
</feature>
<feature type="sequence variant" id="VAR_018635" description="In dbSNP:rs2236369." evidence="4 6">
    <original>S</original>
    <variation>P</variation>
    <location>
        <position position="139"/>
    </location>
</feature>
<feature type="sequence variant" id="VAR_018636" description="In dbSNP:rs2273961.">
    <original>I</original>
    <variation>K</variation>
    <location>
        <position position="218"/>
    </location>
</feature>
<feature type="sequence variant" id="VAR_018637" description="In dbSNP:rs2273962." evidence="4">
    <original>M</original>
    <variation>V</variation>
    <location>
        <position position="223"/>
    </location>
</feature>
<feature type="strand" evidence="9">
    <location>
        <begin position="26"/>
        <end position="31"/>
    </location>
</feature>
<feature type="strand" evidence="9">
    <location>
        <begin position="36"/>
        <end position="41"/>
    </location>
</feature>
<feature type="strand" evidence="9">
    <location>
        <begin position="51"/>
        <end position="59"/>
    </location>
</feature>
<feature type="strand" evidence="9">
    <location>
        <begin position="62"/>
        <end position="69"/>
    </location>
</feature>
<feature type="strand" evidence="9">
    <location>
        <begin position="81"/>
        <end position="85"/>
    </location>
</feature>
<feature type="turn" evidence="9">
    <location>
        <begin position="87"/>
        <end position="89"/>
    </location>
</feature>
<feature type="strand" evidence="9">
    <location>
        <begin position="90"/>
        <end position="96"/>
    </location>
</feature>
<feature type="helix" evidence="9">
    <location>
        <begin position="101"/>
        <end position="103"/>
    </location>
</feature>
<feature type="strand" evidence="9">
    <location>
        <begin position="105"/>
        <end position="112"/>
    </location>
</feature>
<feature type="turn" evidence="9">
    <location>
        <begin position="114"/>
        <end position="116"/>
    </location>
</feature>
<feature type="strand" evidence="9">
    <location>
        <begin position="119"/>
        <end position="130"/>
    </location>
</feature>
<proteinExistence type="evidence at protein level"/>
<keyword id="KW-0002">3D-structure</keyword>
<keyword id="KW-0025">Alternative splicing</keyword>
<keyword id="KW-1003">Cell membrane</keyword>
<keyword id="KW-1015">Disulfide bond</keyword>
<keyword id="KW-0325">Glycoprotein</keyword>
<keyword id="KW-0393">Immunoglobulin domain</keyword>
<keyword id="KW-0472">Membrane</keyword>
<keyword id="KW-1267">Proteomics identification</keyword>
<keyword id="KW-0675">Receptor</keyword>
<keyword id="KW-1185">Reference proteome</keyword>
<keyword id="KW-0732">Signal</keyword>
<keyword id="KW-0812">Transmembrane</keyword>
<keyword id="KW-1133">Transmembrane helix</keyword>
<gene>
    <name type="primary">NCR2</name>
    <name type="synonym">LY95</name>
</gene>